<sequence length="197" mass="20989">MLERIKDSFTESIQTKIDAAEALPESIAKAAEMMVHCLLGGNKILACGNGGSAGDAQHFSAELLNRYEIERPPLPAIALSTDTSTITAIANDYSYDEIFSKQIFALGQPGDILLAISTSGNSGNVIKAMEAALSRDMTIVALTGKDGGAMAGLLSVGDVEIRVPSNVTARIQEVHLLVIHCLCDNIDRTLFPQDEQQ</sequence>
<keyword id="KW-0119">Carbohydrate metabolism</keyword>
<keyword id="KW-0963">Cytoplasm</keyword>
<keyword id="KW-0413">Isomerase</keyword>
<keyword id="KW-0479">Metal-binding</keyword>
<keyword id="KW-1185">Reference proteome</keyword>
<keyword id="KW-0862">Zinc</keyword>
<name>GMHA_SHEB5</name>
<organism>
    <name type="scientific">Shewanella baltica (strain OS155 / ATCC BAA-1091)</name>
    <dbReference type="NCBI Taxonomy" id="325240"/>
    <lineage>
        <taxon>Bacteria</taxon>
        <taxon>Pseudomonadati</taxon>
        <taxon>Pseudomonadota</taxon>
        <taxon>Gammaproteobacteria</taxon>
        <taxon>Alteromonadales</taxon>
        <taxon>Shewanellaceae</taxon>
        <taxon>Shewanella</taxon>
    </lineage>
</organism>
<reference key="1">
    <citation type="submission" date="2007-02" db="EMBL/GenBank/DDBJ databases">
        <title>Complete sequence of chromosome of Shewanella baltica OS155.</title>
        <authorList>
            <consortium name="US DOE Joint Genome Institute"/>
            <person name="Copeland A."/>
            <person name="Lucas S."/>
            <person name="Lapidus A."/>
            <person name="Barry K."/>
            <person name="Detter J.C."/>
            <person name="Glavina del Rio T."/>
            <person name="Hammon N."/>
            <person name="Israni S."/>
            <person name="Dalin E."/>
            <person name="Tice H."/>
            <person name="Pitluck S."/>
            <person name="Sims D.R."/>
            <person name="Brettin T."/>
            <person name="Bruce D."/>
            <person name="Han C."/>
            <person name="Tapia R."/>
            <person name="Brainard J."/>
            <person name="Schmutz J."/>
            <person name="Larimer F."/>
            <person name="Land M."/>
            <person name="Hauser L."/>
            <person name="Kyrpides N."/>
            <person name="Mikhailova N."/>
            <person name="Brettar I."/>
            <person name="Klappenbach J."/>
            <person name="Konstantinidis K."/>
            <person name="Rodrigues J."/>
            <person name="Tiedje J."/>
            <person name="Richardson P."/>
        </authorList>
    </citation>
    <scope>NUCLEOTIDE SEQUENCE [LARGE SCALE GENOMIC DNA]</scope>
    <source>
        <strain>OS155 / ATCC BAA-1091</strain>
    </source>
</reference>
<comment type="function">
    <text evidence="1">Catalyzes the isomerization of sedoheptulose 7-phosphate in D-glycero-D-manno-heptose 7-phosphate.</text>
</comment>
<comment type="catalytic activity">
    <reaction evidence="1">
        <text>2 D-sedoheptulose 7-phosphate = D-glycero-alpha-D-manno-heptose 7-phosphate + D-glycero-beta-D-manno-heptose 7-phosphate</text>
        <dbReference type="Rhea" id="RHEA:27489"/>
        <dbReference type="ChEBI" id="CHEBI:57483"/>
        <dbReference type="ChEBI" id="CHEBI:60203"/>
        <dbReference type="ChEBI" id="CHEBI:60204"/>
        <dbReference type="EC" id="5.3.1.28"/>
    </reaction>
</comment>
<comment type="cofactor">
    <cofactor evidence="1">
        <name>Zn(2+)</name>
        <dbReference type="ChEBI" id="CHEBI:29105"/>
    </cofactor>
    <text evidence="1">Binds 1 zinc ion per subunit.</text>
</comment>
<comment type="pathway">
    <text evidence="1">Carbohydrate biosynthesis; D-glycero-D-manno-heptose 7-phosphate biosynthesis; D-glycero-alpha-D-manno-heptose 7-phosphate and D-glycero-beta-D-manno-heptose 7-phosphate from sedoheptulose 7-phosphate: step 1/1.</text>
</comment>
<comment type="subunit">
    <text evidence="1">Homotetramer.</text>
</comment>
<comment type="subcellular location">
    <subcellularLocation>
        <location evidence="1">Cytoplasm</location>
    </subcellularLocation>
</comment>
<comment type="miscellaneous">
    <text evidence="1">The reaction produces a racemic mixture of D-glycero-alpha-D-manno-heptose 7-phosphate and D-glycero-beta-D-manno-heptose 7-phosphate.</text>
</comment>
<comment type="similarity">
    <text evidence="1">Belongs to the SIS family. GmhA subfamily.</text>
</comment>
<feature type="chain" id="PRO_1000197013" description="Phosphoheptose isomerase">
    <location>
        <begin position="1"/>
        <end position="197"/>
    </location>
</feature>
<feature type="domain" description="SIS" evidence="1">
    <location>
        <begin position="34"/>
        <end position="196"/>
    </location>
</feature>
<feature type="binding site" evidence="1">
    <location>
        <begin position="49"/>
        <end position="51"/>
    </location>
    <ligand>
        <name>substrate</name>
    </ligand>
</feature>
<feature type="binding site" evidence="1">
    <location>
        <position position="58"/>
    </location>
    <ligand>
        <name>Zn(2+)</name>
        <dbReference type="ChEBI" id="CHEBI:29105"/>
    </ligand>
</feature>
<feature type="binding site" evidence="1">
    <location>
        <position position="62"/>
    </location>
    <ligand>
        <name>substrate</name>
    </ligand>
</feature>
<feature type="binding site" evidence="1">
    <location>
        <position position="62"/>
    </location>
    <ligand>
        <name>Zn(2+)</name>
        <dbReference type="ChEBI" id="CHEBI:29105"/>
    </ligand>
</feature>
<feature type="binding site" evidence="1">
    <location>
        <begin position="91"/>
        <end position="92"/>
    </location>
    <ligand>
        <name>substrate</name>
    </ligand>
</feature>
<feature type="binding site" evidence="1">
    <location>
        <begin position="117"/>
        <end position="119"/>
    </location>
    <ligand>
        <name>substrate</name>
    </ligand>
</feature>
<feature type="binding site" evidence="1">
    <location>
        <position position="122"/>
    </location>
    <ligand>
        <name>substrate</name>
    </ligand>
</feature>
<feature type="binding site" evidence="1">
    <location>
        <position position="172"/>
    </location>
    <ligand>
        <name>substrate</name>
    </ligand>
</feature>
<feature type="binding site" evidence="1">
    <location>
        <position position="172"/>
    </location>
    <ligand>
        <name>Zn(2+)</name>
        <dbReference type="ChEBI" id="CHEBI:29105"/>
    </ligand>
</feature>
<feature type="binding site" evidence="1">
    <location>
        <position position="180"/>
    </location>
    <ligand>
        <name>Zn(2+)</name>
        <dbReference type="ChEBI" id="CHEBI:29105"/>
    </ligand>
</feature>
<proteinExistence type="inferred from homology"/>
<gene>
    <name evidence="1" type="primary">gmhA</name>
    <name type="ordered locus">Sbal_4101</name>
</gene>
<evidence type="ECO:0000255" key="1">
    <source>
        <dbReference type="HAMAP-Rule" id="MF_00067"/>
    </source>
</evidence>
<protein>
    <recommendedName>
        <fullName evidence="1">Phosphoheptose isomerase</fullName>
        <ecNumber evidence="1">5.3.1.28</ecNumber>
    </recommendedName>
    <alternativeName>
        <fullName evidence="1">Sedoheptulose 7-phosphate isomerase</fullName>
    </alternativeName>
</protein>
<accession>A3DA03</accession>
<dbReference type="EC" id="5.3.1.28" evidence="1"/>
<dbReference type="EMBL" id="CP000563">
    <property type="protein sequence ID" value="ABN63566.1"/>
    <property type="molecule type" value="Genomic_DNA"/>
</dbReference>
<dbReference type="RefSeq" id="WP_006083530.1">
    <property type="nucleotide sequence ID" value="NC_009052.1"/>
</dbReference>
<dbReference type="SMR" id="A3DA03"/>
<dbReference type="STRING" id="325240.Sbal_4101"/>
<dbReference type="KEGG" id="sbl:Sbal_4101"/>
<dbReference type="HOGENOM" id="CLU_080999_4_0_6"/>
<dbReference type="OrthoDB" id="9810929at2"/>
<dbReference type="UniPathway" id="UPA00041">
    <property type="reaction ID" value="UER00436"/>
</dbReference>
<dbReference type="Proteomes" id="UP000001557">
    <property type="component" value="Chromosome"/>
</dbReference>
<dbReference type="GO" id="GO:0005737">
    <property type="term" value="C:cytoplasm"/>
    <property type="evidence" value="ECO:0007669"/>
    <property type="project" value="UniProtKB-SubCell"/>
</dbReference>
<dbReference type="GO" id="GO:0097367">
    <property type="term" value="F:carbohydrate derivative binding"/>
    <property type="evidence" value="ECO:0007669"/>
    <property type="project" value="InterPro"/>
</dbReference>
<dbReference type="GO" id="GO:0008968">
    <property type="term" value="F:D-sedoheptulose 7-phosphate isomerase activity"/>
    <property type="evidence" value="ECO:0007669"/>
    <property type="project" value="UniProtKB-UniRule"/>
</dbReference>
<dbReference type="GO" id="GO:0008270">
    <property type="term" value="F:zinc ion binding"/>
    <property type="evidence" value="ECO:0007669"/>
    <property type="project" value="UniProtKB-UniRule"/>
</dbReference>
<dbReference type="GO" id="GO:0005975">
    <property type="term" value="P:carbohydrate metabolic process"/>
    <property type="evidence" value="ECO:0007669"/>
    <property type="project" value="UniProtKB-UniRule"/>
</dbReference>
<dbReference type="GO" id="GO:2001061">
    <property type="term" value="P:D-glycero-D-manno-heptose 7-phosphate biosynthetic process"/>
    <property type="evidence" value="ECO:0007669"/>
    <property type="project" value="UniProtKB-UniPathway"/>
</dbReference>
<dbReference type="CDD" id="cd05006">
    <property type="entry name" value="SIS_GmhA"/>
    <property type="match status" value="1"/>
</dbReference>
<dbReference type="Gene3D" id="3.40.50.10490">
    <property type="entry name" value="Glucose-6-phosphate isomerase like protein, domain 1"/>
    <property type="match status" value="1"/>
</dbReference>
<dbReference type="HAMAP" id="MF_00067">
    <property type="entry name" value="GmhA"/>
    <property type="match status" value="1"/>
</dbReference>
<dbReference type="InterPro" id="IPR035461">
    <property type="entry name" value="GmhA/DiaA"/>
</dbReference>
<dbReference type="InterPro" id="IPR004515">
    <property type="entry name" value="Phosphoheptose_Isoase"/>
</dbReference>
<dbReference type="InterPro" id="IPR001347">
    <property type="entry name" value="SIS_dom"/>
</dbReference>
<dbReference type="InterPro" id="IPR046348">
    <property type="entry name" value="SIS_dom_sf"/>
</dbReference>
<dbReference type="InterPro" id="IPR050099">
    <property type="entry name" value="SIS_GmhA/DiaA_subfam"/>
</dbReference>
<dbReference type="NCBIfam" id="NF010546">
    <property type="entry name" value="PRK13936.1"/>
    <property type="match status" value="1"/>
</dbReference>
<dbReference type="PANTHER" id="PTHR30390:SF6">
    <property type="entry name" value="DNAA INITIATOR-ASSOCIATING PROTEIN DIAA"/>
    <property type="match status" value="1"/>
</dbReference>
<dbReference type="PANTHER" id="PTHR30390">
    <property type="entry name" value="SEDOHEPTULOSE 7-PHOSPHATE ISOMERASE / DNAA INITIATOR-ASSOCIATING FACTOR FOR REPLICATION INITIATION"/>
    <property type="match status" value="1"/>
</dbReference>
<dbReference type="Pfam" id="PF13580">
    <property type="entry name" value="SIS_2"/>
    <property type="match status" value="1"/>
</dbReference>
<dbReference type="SUPFAM" id="SSF53697">
    <property type="entry name" value="SIS domain"/>
    <property type="match status" value="1"/>
</dbReference>
<dbReference type="PROSITE" id="PS51464">
    <property type="entry name" value="SIS"/>
    <property type="match status" value="1"/>
</dbReference>